<gene>
    <name evidence="1" type="primary">rpsR</name>
    <name type="ordered locus">RAF_ORF0058</name>
</gene>
<name>RS18_RICAE</name>
<evidence type="ECO:0000255" key="1">
    <source>
        <dbReference type="HAMAP-Rule" id="MF_00270"/>
    </source>
</evidence>
<evidence type="ECO:0000305" key="2"/>
<keyword id="KW-0687">Ribonucleoprotein</keyword>
<keyword id="KW-0689">Ribosomal protein</keyword>
<keyword id="KW-0694">RNA-binding</keyword>
<keyword id="KW-0699">rRNA-binding</keyword>
<feature type="chain" id="PRO_1000204735" description="Small ribosomal subunit protein bS18">
    <location>
        <begin position="1"/>
        <end position="95"/>
    </location>
</feature>
<dbReference type="EMBL" id="CP001612">
    <property type="protein sequence ID" value="ACP53033.1"/>
    <property type="molecule type" value="Genomic_DNA"/>
</dbReference>
<dbReference type="RefSeq" id="WP_012719334.1">
    <property type="nucleotide sequence ID" value="NC_012633.1"/>
</dbReference>
<dbReference type="SMR" id="C3PM73"/>
<dbReference type="KEGG" id="raf:RAF_ORF0058"/>
<dbReference type="HOGENOM" id="CLU_148710_2_1_5"/>
<dbReference type="Proteomes" id="UP000002305">
    <property type="component" value="Chromosome"/>
</dbReference>
<dbReference type="GO" id="GO:0022627">
    <property type="term" value="C:cytosolic small ribosomal subunit"/>
    <property type="evidence" value="ECO:0007669"/>
    <property type="project" value="TreeGrafter"/>
</dbReference>
<dbReference type="GO" id="GO:0070181">
    <property type="term" value="F:small ribosomal subunit rRNA binding"/>
    <property type="evidence" value="ECO:0007669"/>
    <property type="project" value="TreeGrafter"/>
</dbReference>
<dbReference type="GO" id="GO:0003735">
    <property type="term" value="F:structural constituent of ribosome"/>
    <property type="evidence" value="ECO:0007669"/>
    <property type="project" value="InterPro"/>
</dbReference>
<dbReference type="GO" id="GO:0006412">
    <property type="term" value="P:translation"/>
    <property type="evidence" value="ECO:0007669"/>
    <property type="project" value="UniProtKB-UniRule"/>
</dbReference>
<dbReference type="Gene3D" id="4.10.640.10">
    <property type="entry name" value="Ribosomal protein S18"/>
    <property type="match status" value="1"/>
</dbReference>
<dbReference type="HAMAP" id="MF_00270">
    <property type="entry name" value="Ribosomal_bS18"/>
    <property type="match status" value="1"/>
</dbReference>
<dbReference type="InterPro" id="IPR001648">
    <property type="entry name" value="Ribosomal_bS18"/>
</dbReference>
<dbReference type="InterPro" id="IPR018275">
    <property type="entry name" value="Ribosomal_bS18_CS"/>
</dbReference>
<dbReference type="InterPro" id="IPR036870">
    <property type="entry name" value="Ribosomal_bS18_sf"/>
</dbReference>
<dbReference type="NCBIfam" id="TIGR00165">
    <property type="entry name" value="S18"/>
    <property type="match status" value="1"/>
</dbReference>
<dbReference type="PANTHER" id="PTHR13479">
    <property type="entry name" value="30S RIBOSOMAL PROTEIN S18"/>
    <property type="match status" value="1"/>
</dbReference>
<dbReference type="PANTHER" id="PTHR13479:SF40">
    <property type="entry name" value="SMALL RIBOSOMAL SUBUNIT PROTEIN BS18M"/>
    <property type="match status" value="1"/>
</dbReference>
<dbReference type="Pfam" id="PF01084">
    <property type="entry name" value="Ribosomal_S18"/>
    <property type="match status" value="1"/>
</dbReference>
<dbReference type="PRINTS" id="PR00974">
    <property type="entry name" value="RIBOSOMALS18"/>
</dbReference>
<dbReference type="SUPFAM" id="SSF46911">
    <property type="entry name" value="Ribosomal protein S18"/>
    <property type="match status" value="1"/>
</dbReference>
<dbReference type="PROSITE" id="PS00057">
    <property type="entry name" value="RIBOSOMAL_S18"/>
    <property type="match status" value="1"/>
</dbReference>
<accession>C3PM73</accession>
<organism>
    <name type="scientific">Rickettsia africae (strain ESF-5)</name>
    <dbReference type="NCBI Taxonomy" id="347255"/>
    <lineage>
        <taxon>Bacteria</taxon>
        <taxon>Pseudomonadati</taxon>
        <taxon>Pseudomonadota</taxon>
        <taxon>Alphaproteobacteria</taxon>
        <taxon>Rickettsiales</taxon>
        <taxon>Rickettsiaceae</taxon>
        <taxon>Rickettsieae</taxon>
        <taxon>Rickettsia</taxon>
        <taxon>spotted fever group</taxon>
    </lineage>
</organism>
<sequence length="95" mass="10637">MLKSNNTSETAAHKVGDKTAKKVFFRRRKGCPLSVPNAPVIDYKNPELLIKFVSEGGRMLPSRITNVCAKKQRKLNNAIKIARILALLPFVFQAK</sequence>
<protein>
    <recommendedName>
        <fullName evidence="1">Small ribosomal subunit protein bS18</fullName>
    </recommendedName>
    <alternativeName>
        <fullName evidence="2">30S ribosomal protein S18</fullName>
    </alternativeName>
</protein>
<reference key="1">
    <citation type="journal article" date="2009" name="BMC Genomics">
        <title>Analysis of the Rickettsia africae genome reveals that virulence acquisition in Rickettsia species may be explained by genome reduction.</title>
        <authorList>
            <person name="Fournier P.-E."/>
            <person name="El Karkouri K."/>
            <person name="Leroy Q."/>
            <person name="Robert C."/>
            <person name="Giumelli B."/>
            <person name="Renesto P."/>
            <person name="Socolovschi C."/>
            <person name="Parola P."/>
            <person name="Audic S."/>
            <person name="Raoult D."/>
        </authorList>
    </citation>
    <scope>NUCLEOTIDE SEQUENCE [LARGE SCALE GENOMIC DNA]</scope>
    <source>
        <strain>ESF-5</strain>
    </source>
</reference>
<comment type="function">
    <text evidence="1">Binds as a heterodimer with protein bS6 to the central domain of the 16S rRNA, where it helps stabilize the platform of the 30S subunit.</text>
</comment>
<comment type="subunit">
    <text evidence="1">Part of the 30S ribosomal subunit. Forms a tight heterodimer with protein bS6.</text>
</comment>
<comment type="similarity">
    <text evidence="1">Belongs to the bacterial ribosomal protein bS18 family.</text>
</comment>
<proteinExistence type="inferred from homology"/>